<protein>
    <recommendedName>
        <fullName>Interleukin-12 subunit beta</fullName>
        <shortName>IL-12B</shortName>
    </recommendedName>
    <alternativeName>
        <fullName>Cytotoxic lymphocyte maturation factor 40 kDa subunit</fullName>
        <shortName>CLMF p40</shortName>
    </alternativeName>
    <alternativeName>
        <fullName>IL-12 subunit p40</fullName>
    </alternativeName>
</protein>
<dbReference type="EMBL" id="AF421395">
    <property type="protein sequence ID" value="AAL16936.1"/>
    <property type="molecule type" value="mRNA"/>
</dbReference>
<dbReference type="SMR" id="Q91ZK7"/>
<dbReference type="GlyCosmos" id="Q91ZK7">
    <property type="glycosylation" value="4 sites, No reported glycans"/>
</dbReference>
<dbReference type="GO" id="GO:0005615">
    <property type="term" value="C:extracellular space"/>
    <property type="evidence" value="ECO:0007669"/>
    <property type="project" value="UniProtKB-KW"/>
</dbReference>
<dbReference type="GO" id="GO:0016020">
    <property type="term" value="C:membrane"/>
    <property type="evidence" value="ECO:0007669"/>
    <property type="project" value="InterPro"/>
</dbReference>
<dbReference type="GO" id="GO:0005125">
    <property type="term" value="F:cytokine activity"/>
    <property type="evidence" value="ECO:0007669"/>
    <property type="project" value="UniProtKB-KW"/>
</dbReference>
<dbReference type="GO" id="GO:0004896">
    <property type="term" value="F:cytokine receptor activity"/>
    <property type="evidence" value="ECO:0007669"/>
    <property type="project" value="InterPro"/>
</dbReference>
<dbReference type="CDD" id="cd00063">
    <property type="entry name" value="FN3"/>
    <property type="match status" value="1"/>
</dbReference>
<dbReference type="FunFam" id="2.60.40.10:FF:000959">
    <property type="entry name" value="Interleukin-12 subunit beta"/>
    <property type="match status" value="1"/>
</dbReference>
<dbReference type="FunFam" id="2.60.40.10:FF:001008">
    <property type="entry name" value="Interleukin-12 subunit beta"/>
    <property type="match status" value="1"/>
</dbReference>
<dbReference type="Gene3D" id="2.60.40.10">
    <property type="entry name" value="Immunoglobulins"/>
    <property type="match status" value="3"/>
</dbReference>
<dbReference type="InterPro" id="IPR003961">
    <property type="entry name" value="FN3_dom"/>
</dbReference>
<dbReference type="InterPro" id="IPR036116">
    <property type="entry name" value="FN3_sf"/>
</dbReference>
<dbReference type="InterPro" id="IPR003530">
    <property type="entry name" value="Hematopoietin_rcpt_L_F3_CS"/>
</dbReference>
<dbReference type="InterPro" id="IPR007110">
    <property type="entry name" value="Ig-like_dom"/>
</dbReference>
<dbReference type="InterPro" id="IPR036179">
    <property type="entry name" value="Ig-like_dom_sf"/>
</dbReference>
<dbReference type="InterPro" id="IPR013783">
    <property type="entry name" value="Ig-like_fold"/>
</dbReference>
<dbReference type="InterPro" id="IPR003598">
    <property type="entry name" value="Ig_sub2"/>
</dbReference>
<dbReference type="InterPro" id="IPR050676">
    <property type="entry name" value="IL-12"/>
</dbReference>
<dbReference type="InterPro" id="IPR015528">
    <property type="entry name" value="IL-12_beta"/>
</dbReference>
<dbReference type="InterPro" id="IPR019482">
    <property type="entry name" value="IL-12_beta_cen-dom"/>
</dbReference>
<dbReference type="PANTHER" id="PTHR48485:SF4">
    <property type="entry name" value="INTERLEUKIN-12 SUBUNIT BETA"/>
    <property type="match status" value="1"/>
</dbReference>
<dbReference type="PANTHER" id="PTHR48485">
    <property type="entry name" value="INTERLEUKIN-12 SUBUNIT BETA-RELATED"/>
    <property type="match status" value="1"/>
</dbReference>
<dbReference type="Pfam" id="PF16681">
    <property type="entry name" value="Ig_5"/>
    <property type="match status" value="1"/>
</dbReference>
<dbReference type="Pfam" id="PF10420">
    <property type="entry name" value="IL12p40_C"/>
    <property type="match status" value="1"/>
</dbReference>
<dbReference type="PIRSF" id="PIRSF038007">
    <property type="entry name" value="IL_12_beta"/>
    <property type="match status" value="1"/>
</dbReference>
<dbReference type="PRINTS" id="PR01928">
    <property type="entry name" value="INTRLEUKN12B"/>
</dbReference>
<dbReference type="SMART" id="SM00408">
    <property type="entry name" value="IGc2"/>
    <property type="match status" value="1"/>
</dbReference>
<dbReference type="SUPFAM" id="SSF49265">
    <property type="entry name" value="Fibronectin type III"/>
    <property type="match status" value="2"/>
</dbReference>
<dbReference type="SUPFAM" id="SSF48726">
    <property type="entry name" value="Immunoglobulin"/>
    <property type="match status" value="1"/>
</dbReference>
<dbReference type="PROSITE" id="PS50853">
    <property type="entry name" value="FN3"/>
    <property type="match status" value="1"/>
</dbReference>
<dbReference type="PROSITE" id="PS01354">
    <property type="entry name" value="HEMATOPO_REC_L_F3"/>
    <property type="match status" value="1"/>
</dbReference>
<dbReference type="PROSITE" id="PS50835">
    <property type="entry name" value="IG_LIKE"/>
    <property type="match status" value="1"/>
</dbReference>
<sequence length="327" mass="37119">MCHQKLTISWFAMVLLVSPLMAIWELEKDVYVVEVDWSPGAPGERVVLTCDTSEEDDIIWTSDQSSEVVGSGKTLIVQVKEFSDAGQYTCHKGGETLSHSRLLLHKKEDGIWSTDILKDQKDPKNKTFLKCEAANYSGRFTCWWLTAVSTDLKFSLKSSSSSSDSRSVTCGAASLSTEKVTVDQRDYNKYSVACQEDITCPTAEETLPIELVMEAQHKYKYENYSTGFFIRDIIKPDPPKNLQLKPLKSSQVEVSWEYPDSWSTPHSYFSLKFFVQVYRKKEKKGESLLVDKPSAKIRCSKGGEVRVRAQDHYYNSSWSEWASVSCN</sequence>
<name>IL12B_SIGHI</name>
<gene>
    <name type="primary">IL12B</name>
</gene>
<feature type="signal peptide" evidence="1">
    <location>
        <begin position="1"/>
        <end position="22"/>
    </location>
</feature>
<feature type="chain" id="PRO_0000045048" description="Interleukin-12 subunit beta">
    <location>
        <begin position="23"/>
        <end position="327"/>
    </location>
</feature>
<feature type="domain" description="Ig-like C2-type">
    <location>
        <begin position="23"/>
        <end position="106"/>
    </location>
</feature>
<feature type="domain" description="Fibronectin type-III" evidence="6">
    <location>
        <begin position="238"/>
        <end position="327"/>
    </location>
</feature>
<feature type="glycosylation site" description="N-linked (GlcNAc...) asparagine" evidence="4">
    <location>
        <position position="125"/>
    </location>
</feature>
<feature type="glycosylation site" description="N-linked (GlcNAc...) asparagine" evidence="4">
    <location>
        <position position="135"/>
    </location>
</feature>
<feature type="glycosylation site" description="N-linked (GlcNAc...) asparagine" evidence="4">
    <location>
        <position position="223"/>
    </location>
</feature>
<feature type="glycosylation site" description="N-linked (GlcNAc...) asparagine" evidence="4">
    <location>
        <position position="315"/>
    </location>
</feature>
<feature type="disulfide bond" evidence="5">
    <location>
        <begin position="50"/>
        <end position="90"/>
    </location>
</feature>
<feature type="disulfide bond" description="Interchain (with C-92 in IL12A)" evidence="5">
    <location>
        <position position="200"/>
    </location>
</feature>
<proteinExistence type="evidence at transcript level"/>
<evidence type="ECO:0000250" key="1"/>
<evidence type="ECO:0000250" key="2">
    <source>
        <dbReference type="UniProtKB" id="P29460"/>
    </source>
</evidence>
<evidence type="ECO:0000250" key="3">
    <source>
        <dbReference type="UniProtKB" id="P43432"/>
    </source>
</evidence>
<evidence type="ECO:0000255" key="4"/>
<evidence type="ECO:0000255" key="5">
    <source>
        <dbReference type="PROSITE-ProRule" id="PRU00114"/>
    </source>
</evidence>
<evidence type="ECO:0000255" key="6">
    <source>
        <dbReference type="PROSITE-ProRule" id="PRU00316"/>
    </source>
</evidence>
<evidence type="ECO:0000305" key="7"/>
<organism>
    <name type="scientific">Sigmodon hispidus</name>
    <name type="common">Hispid cotton rat</name>
    <dbReference type="NCBI Taxonomy" id="42415"/>
    <lineage>
        <taxon>Eukaryota</taxon>
        <taxon>Metazoa</taxon>
        <taxon>Chordata</taxon>
        <taxon>Craniata</taxon>
        <taxon>Vertebrata</taxon>
        <taxon>Euteleostomi</taxon>
        <taxon>Mammalia</taxon>
        <taxon>Eutheria</taxon>
        <taxon>Euarchontoglires</taxon>
        <taxon>Glires</taxon>
        <taxon>Rodentia</taxon>
        <taxon>Myomorpha</taxon>
        <taxon>Muroidea</taxon>
        <taxon>Cricetidae</taxon>
        <taxon>Sigmodontinae</taxon>
        <taxon>Sigmodon</taxon>
    </lineage>
</organism>
<keyword id="KW-0202">Cytokine</keyword>
<keyword id="KW-1015">Disulfide bond</keyword>
<keyword id="KW-0325">Glycoprotein</keyword>
<keyword id="KW-0393">Immunoglobulin domain</keyword>
<keyword id="KW-0964">Secreted</keyword>
<keyword id="KW-0732">Signal</keyword>
<accession>Q91ZK7</accession>
<comment type="function">
    <text evidence="1">Cytokine that can act as a growth factor for activated T and NK cells, enhance the lytic activity of NK/lymphokine-activated killer cells, and stimulate the production of IFN-gamma by resting PBMC.</text>
</comment>
<comment type="function">
    <text evidence="1">Associates with IL23A to form the IL-23 interleukin, a heterodimeric cytokine which functions in innate and adaptive immunity. IL-23 may constitute with IL-17 an acute response to infection in peripheral tissues. IL-23 binds to a heterodimeric receptor complex composed of IL12RB1 and IL23R, activates the Jak-Stat signaling cascade, stimulates memory rather than naive T-cells and promotes production of pro-inflammatory cytokines. IL-23 induces autoimmune inflammation and thus may be responsible for autoimmune inflammatory diseases and may be important for tumorigenesis (By similarity).</text>
</comment>
<comment type="subunit">
    <text evidence="2 3">Heterodimer with IL12A; disulfide-linked. The heterodimer is known as interleukin IL-12. Heterodimer with IL23A; disulfide-linked. The heterodimer is known as interleukin IL-23. Also secreted as a monomer. Interacts with NBR1; this interaction promotes IL-12 secretion (By similarity).</text>
</comment>
<comment type="subcellular location">
    <subcellularLocation>
        <location>Secreted</location>
    </subcellularLocation>
</comment>
<comment type="similarity">
    <text evidence="7">Belongs to the IL-12B family.</text>
</comment>
<reference key="1">
    <citation type="journal article" date="2004" name="J. Interferon Cytokine Res.">
        <title>The cotton rat: an underutilized animal model for human infectious diseases can now be exploited using specific reagents to cytokines, chemokines, and interferons.</title>
        <authorList>
            <person name="Blanco J.C."/>
            <person name="Pletneva L.M."/>
            <person name="Boukhvalova M."/>
            <person name="Richardson J.Y."/>
            <person name="Harris K.A."/>
            <person name="Prince G.A."/>
        </authorList>
    </citation>
    <scope>NUCLEOTIDE SEQUENCE [MRNA]</scope>
</reference>